<feature type="chain" id="PRO_0000165365" description="Packaging protein P20">
    <location>
        <begin position="1"/>
        <end position="42"/>
    </location>
</feature>
<feature type="transmembrane region" description="Helical" evidence="1">
    <location>
        <begin position="11"/>
        <end position="31"/>
    </location>
</feature>
<protein>
    <recommendedName>
        <fullName>Packaging protein P20</fullName>
    </recommendedName>
</protein>
<sequence length="42" mass="4671">MVNWELLKNPINWLIVILMLTIAGMAATLVCNHFGKNAVTSE</sequence>
<organismHost>
    <name type="scientific">Acinetobacter calcoaceticus</name>
    <dbReference type="NCBI Taxonomy" id="471"/>
</organismHost>
<organismHost>
    <name type="scientific">Escherichia coli</name>
    <dbReference type="NCBI Taxonomy" id="562"/>
</organismHost>
<organismHost>
    <name type="scientific">Proteus mirabilis</name>
    <dbReference type="NCBI Taxonomy" id="584"/>
</organismHost>
<organismHost>
    <name type="scientific">Pseudomonas aeruginosa</name>
    <dbReference type="NCBI Taxonomy" id="287"/>
</organismHost>
<organismHost>
    <name type="scientific">Pseudomonas fluorescens</name>
    <dbReference type="NCBI Taxonomy" id="294"/>
</organismHost>
<organismHost>
    <name type="scientific">Pseudomonas putida</name>
    <name type="common">Arthrobacter siderocapsulatus</name>
    <dbReference type="NCBI Taxonomy" id="303"/>
</organismHost>
<organismHost>
    <name type="scientific">Salmonella typhimurium</name>
    <dbReference type="NCBI Taxonomy" id="90371"/>
</organismHost>
<organismHost>
    <name type="scientific">Vibrio cholerae</name>
    <dbReference type="NCBI Taxonomy" id="666"/>
</organismHost>
<name>PKG20_BPPRD</name>
<evidence type="ECO:0000255" key="1"/>
<evidence type="ECO:0000269" key="2">
    <source>
    </source>
</evidence>
<evidence type="ECO:0000269" key="3">
    <source>
    </source>
</evidence>
<keyword id="KW-1231">Capsid inner membrane protein</keyword>
<keyword id="KW-0472">Membrane</keyword>
<keyword id="KW-1185">Reference proteome</keyword>
<keyword id="KW-0812">Transmembrane</keyword>
<keyword id="KW-1133">Transmembrane helix</keyword>
<keyword id="KW-0231">Viral genome packaging</keyword>
<keyword id="KW-1188">Viral release from host cell</keyword>
<keyword id="KW-0946">Virion</keyword>
<dbReference type="EMBL" id="AY848689">
    <property type="protein sequence ID" value="AAX45914.1"/>
    <property type="molecule type" value="Genomic_DNA"/>
</dbReference>
<dbReference type="PIR" id="B36776">
    <property type="entry name" value="WMBPPJ"/>
</dbReference>
<dbReference type="RefSeq" id="NP_040691.1">
    <property type="nucleotide sequence ID" value="NC_001421.2"/>
</dbReference>
<dbReference type="RefSeq" id="YP_009639967.1">
    <property type="nucleotide sequence ID" value="NC_001421.2"/>
</dbReference>
<dbReference type="SMR" id="P27387"/>
<dbReference type="GeneID" id="1260945"/>
<dbReference type="OrthoDB" id="38363at10239"/>
<dbReference type="Proteomes" id="UP000002143">
    <property type="component" value="Segment"/>
</dbReference>
<dbReference type="GO" id="GO:0016020">
    <property type="term" value="C:membrane"/>
    <property type="evidence" value="ECO:0007669"/>
    <property type="project" value="UniProtKB-KW"/>
</dbReference>
<dbReference type="GO" id="GO:0039641">
    <property type="term" value="C:viral inner membrane"/>
    <property type="evidence" value="ECO:0007669"/>
    <property type="project" value="UniProtKB-KW"/>
</dbReference>
<dbReference type="GO" id="GO:0055036">
    <property type="term" value="C:virion membrane"/>
    <property type="evidence" value="ECO:0007669"/>
    <property type="project" value="UniProtKB-SubCell"/>
</dbReference>
<organism>
    <name type="scientific">Enterobacteria phage PRD1</name>
    <name type="common">Bacteriophage PRD1</name>
    <dbReference type="NCBI Taxonomy" id="10658"/>
    <lineage>
        <taxon>Viruses</taxon>
        <taxon>Varidnaviria</taxon>
        <taxon>Bamfordvirae</taxon>
        <taxon>Preplasmiviricota</taxon>
        <taxon>Tectiliviricetes</taxon>
        <taxon>Kalamavirales</taxon>
        <taxon>Tectiviridae</taxon>
        <taxon>Alphatectivirus</taxon>
        <taxon>Alphatectivirus PRD1</taxon>
    </lineage>
</organism>
<reference key="1">
    <citation type="journal article" date="1991" name="Virology">
        <title>Genome organization of membrane-containing bacteriophage PRD1.</title>
        <authorList>
            <person name="Bamford J.K.H."/>
            <person name="Haenninen A.-L."/>
            <person name="Pakula T.M."/>
            <person name="Ojala P.M."/>
            <person name="Kalkkinen N."/>
            <person name="Frilander M."/>
            <person name="Bamford D.H."/>
        </authorList>
    </citation>
    <scope>NUCLEOTIDE SEQUENCE [GENOMIC DNA]</scope>
</reference>
<reference key="2">
    <citation type="journal article" date="2005" name="J. Mol. Biol.">
        <title>A snapshot of viral evolution from genome analysis of the tectiviridae family.</title>
        <authorList>
            <person name="Saren A.M."/>
            <person name="Ravantti J.J."/>
            <person name="Benson S.D."/>
            <person name="Burnett R.M."/>
            <person name="Paulin L."/>
            <person name="Bamford D.H."/>
            <person name="Bamford J.K.H."/>
        </authorList>
    </citation>
    <scope>NUCLEOTIDE SEQUENCE [GENOMIC DNA]</scope>
</reference>
<reference key="3">
    <citation type="journal article" date="2003" name="J. Virol.">
        <title>The unique vertex of bacterial virus PRD1 is connected to the viral internal membrane.</title>
        <authorList>
            <person name="Stromsten N.J."/>
            <person name="Bamford D.H."/>
            <person name="Bamford J.K.H."/>
        </authorList>
    </citation>
    <scope>SUBCELLULAR LOCATION</scope>
    <scope>IDENTIFICATION IN THE PORTAL COMPLEX</scope>
</reference>
<reference key="4">
    <citation type="journal article" date="2014" name="PLoS Biol.">
        <title>A structural model of the genome packaging process in a membrane-containing double stranded DNA virus.</title>
        <authorList>
            <person name="Hong C."/>
            <person name="Oksanen H.M."/>
            <person name="Liu X."/>
            <person name="Jakana J."/>
            <person name="Bamford D.H."/>
            <person name="Chiu W."/>
        </authorList>
    </citation>
    <scope>FUNCTION</scope>
    <scope>SUBUNIT</scope>
    <scope>IDENTIFICATION IN THE PORTAL COMPLEX</scope>
</reference>
<accession>P27387</accession>
<accession>Q3T4N3</accession>
<comment type="function">
    <text evidence="3">Together with P22, forms the internal part of the portal complex embeded in the virion internal membrane and which plays critical roles in genome packaging and genome ejection. Both proteins multimerize as a single ring-shaped heterdodecamer arranged around a central channel and interact with the P6/P9 external part of the portal.</text>
</comment>
<comment type="subunit">
    <text evidence="2 3">Heterodimer of P20 and P22; further multimerizes as hexamers of heterodimers. Part of the dodecameric portal complex that is composed of the packaging efficiency factor P6, the DNA packaging ATPase P9, and the internal heterododecamer P20/P22 which spans the virion inner membrane.</text>
</comment>
<comment type="subcellular location">
    <subcellularLocation>
        <location>Virion membrane</location>
        <topology>Single-pass membrane protein</topology>
    </subcellularLocation>
    <text evidence="2">Part of the capsid inner membrane. Binds the portal complex at the capsid vertex.</text>
</comment>
<proteinExistence type="evidence at protein level"/>
<gene>
    <name type="primary">XX</name>
    <name type="synonym">J</name>
</gene>